<reference key="1">
    <citation type="journal article" date="1999" name="Nature">
        <title>Sequence and analysis of chromosome 2 of the plant Arabidopsis thaliana.</title>
        <authorList>
            <person name="Lin X."/>
            <person name="Kaul S."/>
            <person name="Rounsley S.D."/>
            <person name="Shea T.P."/>
            <person name="Benito M.-I."/>
            <person name="Town C.D."/>
            <person name="Fujii C.Y."/>
            <person name="Mason T.M."/>
            <person name="Bowman C.L."/>
            <person name="Barnstead M.E."/>
            <person name="Feldblyum T.V."/>
            <person name="Buell C.R."/>
            <person name="Ketchum K.A."/>
            <person name="Lee J.J."/>
            <person name="Ronning C.M."/>
            <person name="Koo H.L."/>
            <person name="Moffat K.S."/>
            <person name="Cronin L.A."/>
            <person name="Shen M."/>
            <person name="Pai G."/>
            <person name="Van Aken S."/>
            <person name="Umayam L."/>
            <person name="Tallon L.J."/>
            <person name="Gill J.E."/>
            <person name="Adams M.D."/>
            <person name="Carrera A.J."/>
            <person name="Creasy T.H."/>
            <person name="Goodman H.M."/>
            <person name="Somerville C.R."/>
            <person name="Copenhaver G.P."/>
            <person name="Preuss D."/>
            <person name="Nierman W.C."/>
            <person name="White O."/>
            <person name="Eisen J.A."/>
            <person name="Salzberg S.L."/>
            <person name="Fraser C.M."/>
            <person name="Venter J.C."/>
        </authorList>
    </citation>
    <scope>NUCLEOTIDE SEQUENCE [LARGE SCALE GENOMIC DNA]</scope>
    <source>
        <strain>cv. Columbia</strain>
    </source>
</reference>
<reference key="2">
    <citation type="journal article" date="2017" name="Plant J.">
        <title>Araport11: a complete reannotation of the Arabidopsis thaliana reference genome.</title>
        <authorList>
            <person name="Cheng C.Y."/>
            <person name="Krishnakumar V."/>
            <person name="Chan A.P."/>
            <person name="Thibaud-Nissen F."/>
            <person name="Schobel S."/>
            <person name="Town C.D."/>
        </authorList>
    </citation>
    <scope>GENOME REANNOTATION</scope>
    <source>
        <strain>cv. Columbia</strain>
    </source>
</reference>
<reference key="3">
    <citation type="journal article" date="2002" name="Science">
        <title>Functional annotation of a full-length Arabidopsis cDNA collection.</title>
        <authorList>
            <person name="Seki M."/>
            <person name="Narusaka M."/>
            <person name="Kamiya A."/>
            <person name="Ishida J."/>
            <person name="Satou M."/>
            <person name="Sakurai T."/>
            <person name="Nakajima M."/>
            <person name="Enju A."/>
            <person name="Akiyama K."/>
            <person name="Oono Y."/>
            <person name="Muramatsu M."/>
            <person name="Hayashizaki Y."/>
            <person name="Kawai J."/>
            <person name="Carninci P."/>
            <person name="Itoh M."/>
            <person name="Ishii Y."/>
            <person name="Arakawa T."/>
            <person name="Shibata K."/>
            <person name="Shinagawa A."/>
            <person name="Shinozaki K."/>
        </authorList>
    </citation>
    <scope>NUCLEOTIDE SEQUENCE [LARGE SCALE MRNA]</scope>
    <source>
        <strain>cv. Columbia</strain>
    </source>
</reference>
<comment type="subcellular location">
    <subcellularLocation>
        <location evidence="1">Nucleus</location>
    </subcellularLocation>
</comment>
<comment type="sequence caution" evidence="3">
    <conflict type="erroneous gene model prediction">
        <sequence resource="EMBL-CDS" id="AAD23895"/>
    </conflict>
    <text>The predicted gene At2g24650 has been split into 2 genes: At2g24645 and At2g24650.</text>
</comment>
<keyword id="KW-0238">DNA-binding</keyword>
<keyword id="KW-0539">Nucleus</keyword>
<keyword id="KW-1185">Reference proteome</keyword>
<keyword id="KW-0677">Repeat</keyword>
<keyword id="KW-0804">Transcription</keyword>
<keyword id="KW-0805">Transcription regulation</keyword>
<dbReference type="EMBL" id="AC006954">
    <property type="protein sequence ID" value="AAD23895.1"/>
    <property type="status" value="ALT_SEQ"/>
    <property type="molecule type" value="Genomic_DNA"/>
</dbReference>
<dbReference type="EMBL" id="CP002685">
    <property type="protein sequence ID" value="AEC07609.1"/>
    <property type="molecule type" value="Genomic_DNA"/>
</dbReference>
<dbReference type="EMBL" id="AK117514">
    <property type="protein sequence ID" value="BAC42177.1"/>
    <property type="molecule type" value="mRNA"/>
</dbReference>
<dbReference type="PIR" id="C84639">
    <property type="entry name" value="C84639"/>
</dbReference>
<dbReference type="RefSeq" id="NP_001189594.1">
    <property type="nucleotide sequence ID" value="NM_001202665.2"/>
</dbReference>
<dbReference type="SMR" id="Q8GYM4"/>
<dbReference type="FunCoup" id="Q8GYM4">
    <property type="interactions" value="68"/>
</dbReference>
<dbReference type="STRING" id="3702.Q8GYM4"/>
<dbReference type="iPTMnet" id="Q8GYM4"/>
<dbReference type="PaxDb" id="3702-AT2G24645.1"/>
<dbReference type="EnsemblPlants" id="AT2G24645.1">
    <property type="protein sequence ID" value="AT2G24645.1"/>
    <property type="gene ID" value="AT2G24645"/>
</dbReference>
<dbReference type="GeneID" id="10723071"/>
<dbReference type="Gramene" id="AT2G24645.1">
    <property type="protein sequence ID" value="AT2G24645.1"/>
    <property type="gene ID" value="AT2G24645"/>
</dbReference>
<dbReference type="KEGG" id="ath:AT2G24645"/>
<dbReference type="Araport" id="AT2G24645"/>
<dbReference type="TAIR" id="AT2G24645"/>
<dbReference type="eggNOG" id="ENOG502SK57">
    <property type="taxonomic scope" value="Eukaryota"/>
</dbReference>
<dbReference type="HOGENOM" id="CLU_014437_2_1_1"/>
<dbReference type="InParanoid" id="Q8GYM4"/>
<dbReference type="OMA" id="CFLANIW"/>
<dbReference type="PRO" id="PR:Q8GYM4"/>
<dbReference type="Proteomes" id="UP000006548">
    <property type="component" value="Chromosome 2"/>
</dbReference>
<dbReference type="ExpressionAtlas" id="Q8GYM4">
    <property type="expression patterns" value="baseline and differential"/>
</dbReference>
<dbReference type="GO" id="GO:0005634">
    <property type="term" value="C:nucleus"/>
    <property type="evidence" value="ECO:0007669"/>
    <property type="project" value="UniProtKB-SubCell"/>
</dbReference>
<dbReference type="GO" id="GO:0003677">
    <property type="term" value="F:DNA binding"/>
    <property type="evidence" value="ECO:0007669"/>
    <property type="project" value="UniProtKB-KW"/>
</dbReference>
<dbReference type="CDD" id="cd10017">
    <property type="entry name" value="B3_DNA"/>
    <property type="match status" value="4"/>
</dbReference>
<dbReference type="FunFam" id="2.40.330.10:FF:000009">
    <property type="entry name" value="Transcriptional factor B3 family protein"/>
    <property type="match status" value="1"/>
</dbReference>
<dbReference type="Gene3D" id="2.40.330.10">
    <property type="entry name" value="DNA-binding pseudobarrel domain"/>
    <property type="match status" value="4"/>
</dbReference>
<dbReference type="InterPro" id="IPR003340">
    <property type="entry name" value="B3_DNA-bd"/>
</dbReference>
<dbReference type="InterPro" id="IPR015300">
    <property type="entry name" value="DNA-bd_pseudobarrel_sf"/>
</dbReference>
<dbReference type="InterPro" id="IPR039218">
    <property type="entry name" value="REM_fam"/>
</dbReference>
<dbReference type="PANTHER" id="PTHR31674">
    <property type="entry name" value="B3 DOMAIN-CONTAINING PROTEIN REM-LIKE 3-RELATED"/>
    <property type="match status" value="1"/>
</dbReference>
<dbReference type="PANTHER" id="PTHR31674:SF66">
    <property type="entry name" value="TF-B3 DOMAIN-CONTAINING PROTEIN"/>
    <property type="match status" value="1"/>
</dbReference>
<dbReference type="Pfam" id="PF02362">
    <property type="entry name" value="B3"/>
    <property type="match status" value="4"/>
</dbReference>
<dbReference type="SMART" id="SM01019">
    <property type="entry name" value="B3"/>
    <property type="match status" value="4"/>
</dbReference>
<dbReference type="SUPFAM" id="SSF101936">
    <property type="entry name" value="DNA-binding pseudobarrel domain"/>
    <property type="match status" value="4"/>
</dbReference>
<dbReference type="PROSITE" id="PS50863">
    <property type="entry name" value="B3"/>
    <property type="match status" value="4"/>
</dbReference>
<name>REM14_ARATH</name>
<accession>Q8GYM4</accession>
<accession>Q9SJA0</accession>
<protein>
    <recommendedName>
        <fullName>B3 domain-containing protein REM14</fullName>
    </recommendedName>
    <alternativeName>
        <fullName>Protein REPRODUCTIVE MERISTEM 14</fullName>
    </alternativeName>
</protein>
<organism>
    <name type="scientific">Arabidopsis thaliana</name>
    <name type="common">Mouse-ear cress</name>
    <dbReference type="NCBI Taxonomy" id="3702"/>
    <lineage>
        <taxon>Eukaryota</taxon>
        <taxon>Viridiplantae</taxon>
        <taxon>Streptophyta</taxon>
        <taxon>Embryophyta</taxon>
        <taxon>Tracheophyta</taxon>
        <taxon>Spermatophyta</taxon>
        <taxon>Magnoliopsida</taxon>
        <taxon>eudicotyledons</taxon>
        <taxon>Gunneridae</taxon>
        <taxon>Pentapetalae</taxon>
        <taxon>rosids</taxon>
        <taxon>malvids</taxon>
        <taxon>Brassicales</taxon>
        <taxon>Brassicaceae</taxon>
        <taxon>Camelineae</taxon>
        <taxon>Arabidopsis</taxon>
    </lineage>
</organism>
<sequence length="490" mass="55530">MANQHFFKPLLPGFHTHLRIPVAFFLKNIEGRYEQKTAELRSDASKITWEVKIDGQRLTDGWKEFALSHDLRIGDIVVFRQERDMSFHVTMLGPSCCEIQYGSCSDEERNLEKKKNPNGEAKSSSLDPSCFSANVAPSSLRYDLMLFPMGFVRENGVVGSGKIVLMNEKGRSWNFNLRQKPSCGTVYVRGGWVSFCDANGLQAGDIYTFKLIKRGGTLVLRLLPKGAESCSLDPSCFVANVAPSTLRYDTLYLPKRFMRENGVDKRRGEMILMNEKGKSWTLDLKLKKSCGTSLIRRGWRSFCSANGLRAGSIITFKLIKKSGTLVLCLLSNEPEEEVCSEANEVESLSTDQESHEESSHNEKISRRKEKKGRMIWKASSSPSENRFVTLNLTPYNILRSALRLPIPFTRMNGINEETKMTLLDKHGMKWLTTLRLVDYKRKRLGMVGGWKGFIQANGVKANESIMLELIWEEETSCVLKFCSKVKLAIK</sequence>
<evidence type="ECO:0000255" key="1">
    <source>
        <dbReference type="PROSITE-ProRule" id="PRU00326"/>
    </source>
</evidence>
<evidence type="ECO:0000256" key="2">
    <source>
        <dbReference type="SAM" id="MobiDB-lite"/>
    </source>
</evidence>
<evidence type="ECO:0000305" key="3"/>
<gene>
    <name type="primary">REM14</name>
    <name type="ordered locus">At2g24645</name>
    <name type="ORF">F25P17.5</name>
</gene>
<proteinExistence type="evidence at transcript level"/>
<feature type="chain" id="PRO_0000375108" description="B3 domain-containing protein REM14">
    <location>
        <begin position="1"/>
        <end position="490"/>
    </location>
</feature>
<feature type="DNA-binding region" description="TF-B3 1" evidence="1">
    <location>
        <begin position="3"/>
        <end position="95"/>
    </location>
</feature>
<feature type="DNA-binding region" description="TF-B3 2" evidence="1">
    <location>
        <begin position="130"/>
        <end position="226"/>
    </location>
</feature>
<feature type="DNA-binding region" description="TF-B3 3" evidence="1">
    <location>
        <begin position="236"/>
        <end position="333"/>
    </location>
</feature>
<feature type="DNA-binding region" description="TF-B3 4" evidence="1">
    <location>
        <begin position="387"/>
        <end position="484"/>
    </location>
</feature>
<feature type="region of interest" description="Disordered" evidence="2">
    <location>
        <begin position="343"/>
        <end position="367"/>
    </location>
</feature>
<feature type="compositionally biased region" description="Basic and acidic residues" evidence="2">
    <location>
        <begin position="352"/>
        <end position="364"/>
    </location>
</feature>
<feature type="sequence conflict" description="In Ref. 3; BAC42177." evidence="3" ref="3">
    <original>E</original>
    <variation>K</variation>
    <location>
        <position position="336"/>
    </location>
</feature>